<comment type="subcellular location">
    <subcellularLocation>
        <location evidence="3">Membrane</location>
        <topology evidence="3">Single-pass type I membrane protein</topology>
    </subcellularLocation>
</comment>
<comment type="similarity">
    <text evidence="3">Belongs to the FAM174 family.</text>
</comment>
<evidence type="ECO:0000255" key="1"/>
<evidence type="ECO:0000256" key="2">
    <source>
        <dbReference type="SAM" id="MobiDB-lite"/>
    </source>
</evidence>
<evidence type="ECO:0000305" key="3"/>
<dbReference type="EMBL" id="CR761132">
    <property type="protein sequence ID" value="CAJ82108.1"/>
    <property type="molecule type" value="mRNA"/>
</dbReference>
<dbReference type="EMBL" id="BC127343">
    <property type="protein sequence ID" value="AAI27344.1"/>
    <property type="molecule type" value="mRNA"/>
</dbReference>
<dbReference type="RefSeq" id="NP_001017124.1">
    <property type="nucleotide sequence ID" value="NM_001017124.2"/>
</dbReference>
<dbReference type="SMR" id="A0JPB5"/>
<dbReference type="FunCoup" id="A0JPB5">
    <property type="interactions" value="171"/>
</dbReference>
<dbReference type="STRING" id="8364.ENSXETP00000043775"/>
<dbReference type="GlyCosmos" id="A0JPB5">
    <property type="glycosylation" value="1 site, No reported glycans"/>
</dbReference>
<dbReference type="PaxDb" id="8364-ENSXETP00000055455"/>
<dbReference type="DNASU" id="549878"/>
<dbReference type="GeneID" id="549878"/>
<dbReference type="KEGG" id="xtr:549878"/>
<dbReference type="AGR" id="Xenbase:XB-GENE-6538612"/>
<dbReference type="CTD" id="345757"/>
<dbReference type="Xenbase" id="XB-GENE-6538612">
    <property type="gene designation" value="fam174a"/>
</dbReference>
<dbReference type="eggNOG" id="ENOG502S4HB">
    <property type="taxonomic scope" value="Eukaryota"/>
</dbReference>
<dbReference type="InParanoid" id="A0JPB5"/>
<dbReference type="Proteomes" id="UP000008143">
    <property type="component" value="Chromosome 1"/>
</dbReference>
<dbReference type="Bgee" id="ENSXETG00000026245">
    <property type="expression patterns" value="Expressed in testis and 13 other cell types or tissues"/>
</dbReference>
<dbReference type="GO" id="GO:0016020">
    <property type="term" value="C:membrane"/>
    <property type="evidence" value="ECO:0007669"/>
    <property type="project" value="UniProtKB-SubCell"/>
</dbReference>
<dbReference type="InterPro" id="IPR009565">
    <property type="entry name" value="FAM174-like"/>
</dbReference>
<dbReference type="PANTHER" id="PTHR28607">
    <property type="entry name" value="EXPRESSED PROTEIN"/>
    <property type="match status" value="1"/>
</dbReference>
<dbReference type="PANTHER" id="PTHR28607:SF1">
    <property type="entry name" value="MEMBRANE PROTEIN FAM174A"/>
    <property type="match status" value="1"/>
</dbReference>
<dbReference type="Pfam" id="PF06679">
    <property type="entry name" value="DUF1180"/>
    <property type="match status" value="1"/>
</dbReference>
<accession>A0JPB5</accession>
<accession>Q28H02</accession>
<proteinExistence type="evidence at transcript level"/>
<keyword id="KW-0325">Glycoprotein</keyword>
<keyword id="KW-0472">Membrane</keyword>
<keyword id="KW-1185">Reference proteome</keyword>
<keyword id="KW-0732">Signal</keyword>
<keyword id="KW-0812">Transmembrane</keyword>
<keyword id="KW-1133">Transmembrane helix</keyword>
<reference key="1">
    <citation type="submission" date="2006-10" db="EMBL/GenBank/DDBJ databases">
        <authorList>
            <consortium name="Sanger Xenopus tropicalis EST/cDNA project"/>
        </authorList>
    </citation>
    <scope>NUCLEOTIDE SEQUENCE [LARGE SCALE MRNA]</scope>
    <source>
        <tissue>Egg</tissue>
    </source>
</reference>
<reference key="2">
    <citation type="submission" date="2006-11" db="EMBL/GenBank/DDBJ databases">
        <authorList>
            <consortium name="NIH - Xenopus Gene Collection (XGC) project"/>
        </authorList>
    </citation>
    <scope>NUCLEOTIDE SEQUENCE [LARGE SCALE MRNA]</scope>
    <source>
        <strain>N6</strain>
        <tissue>Skin</tissue>
    </source>
</reference>
<feature type="signal peptide" evidence="1">
    <location>
        <begin position="1"/>
        <end position="30"/>
    </location>
</feature>
<feature type="chain" id="PRO_0000370364" description="Membrane protein FAM174">
    <location>
        <begin position="31"/>
        <end position="146"/>
    </location>
</feature>
<feature type="topological domain" description="Extracellular" evidence="1">
    <location>
        <begin position="31"/>
        <end position="80"/>
    </location>
</feature>
<feature type="transmembrane region" description="Helical" evidence="1">
    <location>
        <begin position="81"/>
        <end position="101"/>
    </location>
</feature>
<feature type="topological domain" description="Cytoplasmic" evidence="1">
    <location>
        <begin position="102"/>
        <end position="146"/>
    </location>
</feature>
<feature type="region of interest" description="Disordered" evidence="2">
    <location>
        <begin position="43"/>
        <end position="75"/>
    </location>
</feature>
<feature type="region of interest" description="Disordered" evidence="2">
    <location>
        <begin position="125"/>
        <end position="146"/>
    </location>
</feature>
<feature type="compositionally biased region" description="Acidic residues" evidence="2">
    <location>
        <begin position="129"/>
        <end position="138"/>
    </location>
</feature>
<feature type="glycosylation site" description="N-linked (GlcNAc...) asparagine" evidence="1">
    <location>
        <position position="55"/>
    </location>
</feature>
<name>F174_XENTR</name>
<sequence>MGCNSYMPQGSAGGMLLLLLAFCLLGDAGCALSPPAASPALPTAHLPLSPRKGSNSSTAAGAPLATVPSATSPNKPRTQRALVVLVLVSAAVIIYFVIRTMRTRRKNKKTRKYGVLDTNLGNMELTPLEQDDEDDDTLFDANQSRR</sequence>
<gene>
    <name type="primary">fam174</name>
    <name type="ORF">TEgg068m05.1</name>
</gene>
<protein>
    <recommendedName>
        <fullName>Membrane protein FAM174</fullName>
    </recommendedName>
    <alternativeName>
        <fullName>Transmembrane protein 157</fullName>
    </alternativeName>
</protein>
<organism>
    <name type="scientific">Xenopus tropicalis</name>
    <name type="common">Western clawed frog</name>
    <name type="synonym">Silurana tropicalis</name>
    <dbReference type="NCBI Taxonomy" id="8364"/>
    <lineage>
        <taxon>Eukaryota</taxon>
        <taxon>Metazoa</taxon>
        <taxon>Chordata</taxon>
        <taxon>Craniata</taxon>
        <taxon>Vertebrata</taxon>
        <taxon>Euteleostomi</taxon>
        <taxon>Amphibia</taxon>
        <taxon>Batrachia</taxon>
        <taxon>Anura</taxon>
        <taxon>Pipoidea</taxon>
        <taxon>Pipidae</taxon>
        <taxon>Xenopodinae</taxon>
        <taxon>Xenopus</taxon>
        <taxon>Silurana</taxon>
    </lineage>
</organism>